<accession>Q5M561</accession>
<feature type="chain" id="PRO_0000133987" description="Enolase">
    <location>
        <begin position="1"/>
        <end position="434"/>
    </location>
</feature>
<feature type="active site" description="Proton donor" evidence="1">
    <location>
        <position position="205"/>
    </location>
</feature>
<feature type="active site" description="Proton acceptor" evidence="1">
    <location>
        <position position="343"/>
    </location>
</feature>
<feature type="binding site" evidence="1">
    <location>
        <position position="163"/>
    </location>
    <ligand>
        <name>(2R)-2-phosphoglycerate</name>
        <dbReference type="ChEBI" id="CHEBI:58289"/>
    </ligand>
</feature>
<feature type="binding site" evidence="1">
    <location>
        <position position="242"/>
    </location>
    <ligand>
        <name>Mg(2+)</name>
        <dbReference type="ChEBI" id="CHEBI:18420"/>
    </ligand>
</feature>
<feature type="binding site" evidence="1">
    <location>
        <position position="291"/>
    </location>
    <ligand>
        <name>Mg(2+)</name>
        <dbReference type="ChEBI" id="CHEBI:18420"/>
    </ligand>
</feature>
<feature type="binding site" evidence="1">
    <location>
        <position position="318"/>
    </location>
    <ligand>
        <name>Mg(2+)</name>
        <dbReference type="ChEBI" id="CHEBI:18420"/>
    </ligand>
</feature>
<feature type="binding site" evidence="1">
    <location>
        <position position="343"/>
    </location>
    <ligand>
        <name>(2R)-2-phosphoglycerate</name>
        <dbReference type="ChEBI" id="CHEBI:58289"/>
    </ligand>
</feature>
<feature type="binding site" evidence="1">
    <location>
        <position position="372"/>
    </location>
    <ligand>
        <name>(2R)-2-phosphoglycerate</name>
        <dbReference type="ChEBI" id="CHEBI:58289"/>
    </ligand>
</feature>
<feature type="binding site" evidence="1">
    <location>
        <position position="373"/>
    </location>
    <ligand>
        <name>(2R)-2-phosphoglycerate</name>
        <dbReference type="ChEBI" id="CHEBI:58289"/>
    </ligand>
</feature>
<feature type="binding site" evidence="1">
    <location>
        <position position="394"/>
    </location>
    <ligand>
        <name>(2R)-2-phosphoglycerate</name>
        <dbReference type="ChEBI" id="CHEBI:58289"/>
    </ligand>
</feature>
<organism>
    <name type="scientific">Streptococcus thermophilus (strain ATCC BAA-250 / LMG 18311)</name>
    <dbReference type="NCBI Taxonomy" id="264199"/>
    <lineage>
        <taxon>Bacteria</taxon>
        <taxon>Bacillati</taxon>
        <taxon>Bacillota</taxon>
        <taxon>Bacilli</taxon>
        <taxon>Lactobacillales</taxon>
        <taxon>Streptococcaceae</taxon>
        <taxon>Streptococcus</taxon>
    </lineage>
</organism>
<comment type="function">
    <text evidence="1">Catalyzes the reversible conversion of 2-phosphoglycerate (2-PG) into phosphoenolpyruvate (PEP). It is essential for the degradation of carbohydrates via glycolysis.</text>
</comment>
<comment type="catalytic activity">
    <reaction evidence="1">
        <text>(2R)-2-phosphoglycerate = phosphoenolpyruvate + H2O</text>
        <dbReference type="Rhea" id="RHEA:10164"/>
        <dbReference type="ChEBI" id="CHEBI:15377"/>
        <dbReference type="ChEBI" id="CHEBI:58289"/>
        <dbReference type="ChEBI" id="CHEBI:58702"/>
        <dbReference type="EC" id="4.2.1.11"/>
    </reaction>
</comment>
<comment type="cofactor">
    <cofactor evidence="1">
        <name>Mg(2+)</name>
        <dbReference type="ChEBI" id="CHEBI:18420"/>
    </cofactor>
    <text evidence="1">Binds a second Mg(2+) ion via substrate during catalysis.</text>
</comment>
<comment type="pathway">
    <text evidence="1">Carbohydrate degradation; glycolysis; pyruvate from D-glyceraldehyde 3-phosphate: step 4/5.</text>
</comment>
<comment type="subcellular location">
    <subcellularLocation>
        <location evidence="1">Cytoplasm</location>
    </subcellularLocation>
    <subcellularLocation>
        <location evidence="1">Secreted</location>
    </subcellularLocation>
    <subcellularLocation>
        <location evidence="1">Cell surface</location>
    </subcellularLocation>
    <text evidence="1">Fractions of enolase are present in both the cytoplasm and on the cell surface.</text>
</comment>
<comment type="similarity">
    <text evidence="1">Belongs to the enolase family.</text>
</comment>
<name>ENO_STRT2</name>
<proteinExistence type="inferred from homology"/>
<evidence type="ECO:0000255" key="1">
    <source>
        <dbReference type="HAMAP-Rule" id="MF_00318"/>
    </source>
</evidence>
<dbReference type="EC" id="4.2.1.11" evidence="1"/>
<dbReference type="EMBL" id="CP000023">
    <property type="protein sequence ID" value="AAV60341.1"/>
    <property type="molecule type" value="Genomic_DNA"/>
</dbReference>
<dbReference type="RefSeq" id="WP_011225708.1">
    <property type="nucleotide sequence ID" value="NC_006448.1"/>
</dbReference>
<dbReference type="SMR" id="Q5M561"/>
<dbReference type="STRING" id="264199.stu0635"/>
<dbReference type="GeneID" id="66898542"/>
<dbReference type="KEGG" id="stl:stu0635"/>
<dbReference type="eggNOG" id="COG0148">
    <property type="taxonomic scope" value="Bacteria"/>
</dbReference>
<dbReference type="HOGENOM" id="CLU_031223_2_1_9"/>
<dbReference type="UniPathway" id="UPA00109">
    <property type="reaction ID" value="UER00187"/>
</dbReference>
<dbReference type="Proteomes" id="UP000001170">
    <property type="component" value="Chromosome"/>
</dbReference>
<dbReference type="GO" id="GO:0009986">
    <property type="term" value="C:cell surface"/>
    <property type="evidence" value="ECO:0007669"/>
    <property type="project" value="UniProtKB-SubCell"/>
</dbReference>
<dbReference type="GO" id="GO:0005576">
    <property type="term" value="C:extracellular region"/>
    <property type="evidence" value="ECO:0007669"/>
    <property type="project" value="UniProtKB-SubCell"/>
</dbReference>
<dbReference type="GO" id="GO:0009274">
    <property type="term" value="C:peptidoglycan-based cell wall"/>
    <property type="evidence" value="ECO:0007669"/>
    <property type="project" value="UniProtKB-ARBA"/>
</dbReference>
<dbReference type="GO" id="GO:0000015">
    <property type="term" value="C:phosphopyruvate hydratase complex"/>
    <property type="evidence" value="ECO:0007669"/>
    <property type="project" value="InterPro"/>
</dbReference>
<dbReference type="GO" id="GO:0000287">
    <property type="term" value="F:magnesium ion binding"/>
    <property type="evidence" value="ECO:0007669"/>
    <property type="project" value="UniProtKB-UniRule"/>
</dbReference>
<dbReference type="GO" id="GO:0004634">
    <property type="term" value="F:phosphopyruvate hydratase activity"/>
    <property type="evidence" value="ECO:0007669"/>
    <property type="project" value="UniProtKB-UniRule"/>
</dbReference>
<dbReference type="GO" id="GO:0006096">
    <property type="term" value="P:glycolytic process"/>
    <property type="evidence" value="ECO:0007669"/>
    <property type="project" value="UniProtKB-UniRule"/>
</dbReference>
<dbReference type="CDD" id="cd03313">
    <property type="entry name" value="enolase"/>
    <property type="match status" value="1"/>
</dbReference>
<dbReference type="FunFam" id="3.20.20.120:FF:000001">
    <property type="entry name" value="Enolase"/>
    <property type="match status" value="1"/>
</dbReference>
<dbReference type="FunFam" id="3.30.390.10:FF:000001">
    <property type="entry name" value="Enolase"/>
    <property type="match status" value="1"/>
</dbReference>
<dbReference type="Gene3D" id="3.20.20.120">
    <property type="entry name" value="Enolase-like C-terminal domain"/>
    <property type="match status" value="1"/>
</dbReference>
<dbReference type="Gene3D" id="3.30.390.10">
    <property type="entry name" value="Enolase-like, N-terminal domain"/>
    <property type="match status" value="1"/>
</dbReference>
<dbReference type="HAMAP" id="MF_00318">
    <property type="entry name" value="Enolase"/>
    <property type="match status" value="1"/>
</dbReference>
<dbReference type="InterPro" id="IPR000941">
    <property type="entry name" value="Enolase"/>
</dbReference>
<dbReference type="InterPro" id="IPR036849">
    <property type="entry name" value="Enolase-like_C_sf"/>
</dbReference>
<dbReference type="InterPro" id="IPR029017">
    <property type="entry name" value="Enolase-like_N"/>
</dbReference>
<dbReference type="InterPro" id="IPR020810">
    <property type="entry name" value="Enolase_C"/>
</dbReference>
<dbReference type="InterPro" id="IPR020809">
    <property type="entry name" value="Enolase_CS"/>
</dbReference>
<dbReference type="InterPro" id="IPR020811">
    <property type="entry name" value="Enolase_N"/>
</dbReference>
<dbReference type="NCBIfam" id="TIGR01060">
    <property type="entry name" value="eno"/>
    <property type="match status" value="1"/>
</dbReference>
<dbReference type="PANTHER" id="PTHR11902">
    <property type="entry name" value="ENOLASE"/>
    <property type="match status" value="1"/>
</dbReference>
<dbReference type="PANTHER" id="PTHR11902:SF1">
    <property type="entry name" value="ENOLASE"/>
    <property type="match status" value="1"/>
</dbReference>
<dbReference type="Pfam" id="PF00113">
    <property type="entry name" value="Enolase_C"/>
    <property type="match status" value="1"/>
</dbReference>
<dbReference type="Pfam" id="PF03952">
    <property type="entry name" value="Enolase_N"/>
    <property type="match status" value="1"/>
</dbReference>
<dbReference type="PIRSF" id="PIRSF001400">
    <property type="entry name" value="Enolase"/>
    <property type="match status" value="1"/>
</dbReference>
<dbReference type="PRINTS" id="PR00148">
    <property type="entry name" value="ENOLASE"/>
</dbReference>
<dbReference type="SFLD" id="SFLDF00002">
    <property type="entry name" value="enolase"/>
    <property type="match status" value="1"/>
</dbReference>
<dbReference type="SFLD" id="SFLDG00178">
    <property type="entry name" value="enolase"/>
    <property type="match status" value="1"/>
</dbReference>
<dbReference type="SMART" id="SM01192">
    <property type="entry name" value="Enolase_C"/>
    <property type="match status" value="1"/>
</dbReference>
<dbReference type="SMART" id="SM01193">
    <property type="entry name" value="Enolase_N"/>
    <property type="match status" value="1"/>
</dbReference>
<dbReference type="SUPFAM" id="SSF51604">
    <property type="entry name" value="Enolase C-terminal domain-like"/>
    <property type="match status" value="1"/>
</dbReference>
<dbReference type="SUPFAM" id="SSF54826">
    <property type="entry name" value="Enolase N-terminal domain-like"/>
    <property type="match status" value="1"/>
</dbReference>
<dbReference type="PROSITE" id="PS00164">
    <property type="entry name" value="ENOLASE"/>
    <property type="match status" value="1"/>
</dbReference>
<gene>
    <name evidence="1" type="primary">eno</name>
    <name type="ordered locus">stu0635</name>
</gene>
<keyword id="KW-0963">Cytoplasm</keyword>
<keyword id="KW-0324">Glycolysis</keyword>
<keyword id="KW-0456">Lyase</keyword>
<keyword id="KW-0460">Magnesium</keyword>
<keyword id="KW-0479">Metal-binding</keyword>
<keyword id="KW-1185">Reference proteome</keyword>
<keyword id="KW-0964">Secreted</keyword>
<reference key="1">
    <citation type="journal article" date="2004" name="Nat. Biotechnol.">
        <title>Complete sequence and comparative genome analysis of the dairy bacterium Streptococcus thermophilus.</title>
        <authorList>
            <person name="Bolotin A."/>
            <person name="Quinquis B."/>
            <person name="Renault P."/>
            <person name="Sorokin A."/>
            <person name="Ehrlich S.D."/>
            <person name="Kulakauskas S."/>
            <person name="Lapidus A."/>
            <person name="Goltsman E."/>
            <person name="Mazur M."/>
            <person name="Pusch G.D."/>
            <person name="Fonstein M."/>
            <person name="Overbeek R."/>
            <person name="Kyprides N."/>
            <person name="Purnelle B."/>
            <person name="Prozzi D."/>
            <person name="Ngui K."/>
            <person name="Masuy D."/>
            <person name="Hancy F."/>
            <person name="Burteau S."/>
            <person name="Boutry M."/>
            <person name="Delcour J."/>
            <person name="Goffeau A."/>
            <person name="Hols P."/>
        </authorList>
    </citation>
    <scope>NUCLEOTIDE SEQUENCE [LARGE SCALE GENOMIC DNA]</scope>
    <source>
        <strain>ATCC BAA-250 / LMG 18311</strain>
    </source>
</reference>
<sequence>MSIITDVYAREVLDSRGNPTLEVEVYTESGAFGRGMVPSGASTGEHEAVELRDGDKARYGGLGTQKAVDNVNNVIAEHIIGFDVRDQQGIDRAMIALDGTPNKGKLGANAILGVSIAVARAAADYLEVPLYSYLGGFNTKVLPTPMMNIINGGSHSDAPIAFQEFMIVPAGAPTFKEALRWGAEIFHALKKILKERGLETAVGDEGGFAPRFDGTEDGVETIIKAIEAAGYVPGKDVFIGLDCASSEFYDAERKVYDYTKFEGEGAAVRTAAEQIDYLEELVNKYPIITIEDGMDENDWDGWKALTERLGDKVQLVGDDFFVTNTAYLEKGIAEHAANSILIKVNQIGTLTETFDAIEMAKEAGYTAVVSHRSGETEDSTIADIAVATNAGQIKTGSLSRTDRIAKYNQLLRIEDQLGEVAEYRGLKSFYNLKK</sequence>
<protein>
    <recommendedName>
        <fullName evidence="1">Enolase</fullName>
        <ecNumber evidence="1">4.2.1.11</ecNumber>
    </recommendedName>
    <alternativeName>
        <fullName evidence="1">2-phospho-D-glycerate hydro-lyase</fullName>
    </alternativeName>
    <alternativeName>
        <fullName evidence="1">2-phosphoglycerate dehydratase</fullName>
    </alternativeName>
</protein>